<feature type="chain" id="PRO_0000062735" description="Cell division protein FtsA">
    <location>
        <begin position="1"/>
        <end position="420"/>
    </location>
</feature>
<protein>
    <recommendedName>
        <fullName evidence="1">Cell division protein FtsA</fullName>
    </recommendedName>
</protein>
<gene>
    <name evidence="1" type="primary">ftsA</name>
    <name type="ordered locus">Z0104</name>
    <name type="ordered locus">ECs0098</name>
</gene>
<accession>P0ABH2</accession>
<accession>P06137</accession>
<accession>Q47229</accession>
<dbReference type="EMBL" id="AE005174">
    <property type="protein sequence ID" value="AAG54398.1"/>
    <property type="molecule type" value="Genomic_DNA"/>
</dbReference>
<dbReference type="EMBL" id="BA000007">
    <property type="protein sequence ID" value="BAB33521.1"/>
    <property type="molecule type" value="Genomic_DNA"/>
</dbReference>
<dbReference type="PIR" id="B85492">
    <property type="entry name" value="B85492"/>
</dbReference>
<dbReference type="PIR" id="B90641">
    <property type="entry name" value="B90641"/>
</dbReference>
<dbReference type="RefSeq" id="NP_308125.1">
    <property type="nucleotide sequence ID" value="NC_002695.1"/>
</dbReference>
<dbReference type="RefSeq" id="WP_000588474.1">
    <property type="nucleotide sequence ID" value="NZ_VOAI01000002.1"/>
</dbReference>
<dbReference type="SMR" id="P0ABH2"/>
<dbReference type="STRING" id="155864.Z0104"/>
<dbReference type="GeneID" id="913567"/>
<dbReference type="GeneID" id="93777340"/>
<dbReference type="KEGG" id="ece:Z0104"/>
<dbReference type="KEGG" id="ecs:ECs_0098"/>
<dbReference type="PATRIC" id="fig|386585.9.peg.198"/>
<dbReference type="eggNOG" id="COG0849">
    <property type="taxonomic scope" value="Bacteria"/>
</dbReference>
<dbReference type="HOGENOM" id="CLU_037850_3_2_6"/>
<dbReference type="OMA" id="RLEANFH"/>
<dbReference type="Proteomes" id="UP000000558">
    <property type="component" value="Chromosome"/>
</dbReference>
<dbReference type="Proteomes" id="UP000002519">
    <property type="component" value="Chromosome"/>
</dbReference>
<dbReference type="GO" id="GO:0032153">
    <property type="term" value="C:cell division site"/>
    <property type="evidence" value="ECO:0007669"/>
    <property type="project" value="UniProtKB-UniRule"/>
</dbReference>
<dbReference type="GO" id="GO:0009898">
    <property type="term" value="C:cytoplasmic side of plasma membrane"/>
    <property type="evidence" value="ECO:0007669"/>
    <property type="project" value="UniProtKB-UniRule"/>
</dbReference>
<dbReference type="GO" id="GO:0043093">
    <property type="term" value="P:FtsZ-dependent cytokinesis"/>
    <property type="evidence" value="ECO:0007669"/>
    <property type="project" value="UniProtKB-UniRule"/>
</dbReference>
<dbReference type="CDD" id="cd24048">
    <property type="entry name" value="ASKHA_NBD_FtsA"/>
    <property type="match status" value="1"/>
</dbReference>
<dbReference type="FunFam" id="3.30.1490.110:FF:000001">
    <property type="entry name" value="Cell division protein FtsA"/>
    <property type="match status" value="1"/>
</dbReference>
<dbReference type="FunFam" id="3.30.420.40:FF:000030">
    <property type="entry name" value="Cell division protein FtsA"/>
    <property type="match status" value="1"/>
</dbReference>
<dbReference type="Gene3D" id="3.30.1490.110">
    <property type="match status" value="1"/>
</dbReference>
<dbReference type="Gene3D" id="3.30.420.40">
    <property type="match status" value="1"/>
</dbReference>
<dbReference type="HAMAP" id="MF_02033">
    <property type="entry name" value="FtsA"/>
    <property type="match status" value="1"/>
</dbReference>
<dbReference type="InterPro" id="IPR043129">
    <property type="entry name" value="ATPase_NBD"/>
</dbReference>
<dbReference type="InterPro" id="IPR020823">
    <property type="entry name" value="Cell_div_FtsA"/>
</dbReference>
<dbReference type="InterPro" id="IPR050696">
    <property type="entry name" value="FtsA/MreB"/>
</dbReference>
<dbReference type="InterPro" id="IPR003494">
    <property type="entry name" value="SHS2_FtsA"/>
</dbReference>
<dbReference type="NCBIfam" id="TIGR01174">
    <property type="entry name" value="ftsA"/>
    <property type="match status" value="1"/>
</dbReference>
<dbReference type="NCBIfam" id="NF007009">
    <property type="entry name" value="PRK09472.1"/>
    <property type="match status" value="1"/>
</dbReference>
<dbReference type="PANTHER" id="PTHR32432:SF4">
    <property type="entry name" value="CELL DIVISION PROTEIN FTSA"/>
    <property type="match status" value="1"/>
</dbReference>
<dbReference type="PANTHER" id="PTHR32432">
    <property type="entry name" value="CELL DIVISION PROTEIN FTSA-RELATED"/>
    <property type="match status" value="1"/>
</dbReference>
<dbReference type="Pfam" id="PF14450">
    <property type="entry name" value="FtsA"/>
    <property type="match status" value="1"/>
</dbReference>
<dbReference type="Pfam" id="PF02491">
    <property type="entry name" value="SHS2_FTSA"/>
    <property type="match status" value="1"/>
</dbReference>
<dbReference type="PIRSF" id="PIRSF003101">
    <property type="entry name" value="FtsA"/>
    <property type="match status" value="1"/>
</dbReference>
<dbReference type="SMART" id="SM00842">
    <property type="entry name" value="FtsA"/>
    <property type="match status" value="1"/>
</dbReference>
<dbReference type="SUPFAM" id="SSF53067">
    <property type="entry name" value="Actin-like ATPase domain"/>
    <property type="match status" value="2"/>
</dbReference>
<comment type="function">
    <text evidence="1">Cell division protein that is involved in the assembly of the Z ring. May serve as a membrane anchor for the Z ring.</text>
</comment>
<comment type="subunit">
    <text evidence="1">Self-interacts. Interacts with FtsZ.</text>
</comment>
<comment type="subcellular location">
    <subcellularLocation>
        <location evidence="1">Cell inner membrane</location>
        <topology evidence="1">Peripheral membrane protein</topology>
        <orientation evidence="1">Cytoplasmic side</orientation>
    </subcellularLocation>
    <text evidence="1">Localizes to the Z ring in an FtsZ-dependent manner. Targeted to the membrane through a conserved C-terminal amphipathic helix.</text>
</comment>
<comment type="similarity">
    <text evidence="1">Belongs to the FtsA/MreB family.</text>
</comment>
<keyword id="KW-0131">Cell cycle</keyword>
<keyword id="KW-0132">Cell division</keyword>
<keyword id="KW-0997">Cell inner membrane</keyword>
<keyword id="KW-1003">Cell membrane</keyword>
<keyword id="KW-0472">Membrane</keyword>
<keyword id="KW-1185">Reference proteome</keyword>
<reference key="1">
    <citation type="journal article" date="2001" name="Nature">
        <title>Genome sequence of enterohaemorrhagic Escherichia coli O157:H7.</title>
        <authorList>
            <person name="Perna N.T."/>
            <person name="Plunkett G. III"/>
            <person name="Burland V."/>
            <person name="Mau B."/>
            <person name="Glasner J.D."/>
            <person name="Rose D.J."/>
            <person name="Mayhew G.F."/>
            <person name="Evans P.S."/>
            <person name="Gregor J."/>
            <person name="Kirkpatrick H.A."/>
            <person name="Posfai G."/>
            <person name="Hackett J."/>
            <person name="Klink S."/>
            <person name="Boutin A."/>
            <person name="Shao Y."/>
            <person name="Miller L."/>
            <person name="Grotbeck E.J."/>
            <person name="Davis N.W."/>
            <person name="Lim A."/>
            <person name="Dimalanta E.T."/>
            <person name="Potamousis K."/>
            <person name="Apodaca J."/>
            <person name="Anantharaman T.S."/>
            <person name="Lin J."/>
            <person name="Yen G."/>
            <person name="Schwartz D.C."/>
            <person name="Welch R.A."/>
            <person name="Blattner F.R."/>
        </authorList>
    </citation>
    <scope>NUCLEOTIDE SEQUENCE [LARGE SCALE GENOMIC DNA]</scope>
    <source>
        <strain>O157:H7 / EDL933 / ATCC 700927 / EHEC</strain>
    </source>
</reference>
<reference key="2">
    <citation type="journal article" date="2001" name="DNA Res.">
        <title>Complete genome sequence of enterohemorrhagic Escherichia coli O157:H7 and genomic comparison with a laboratory strain K-12.</title>
        <authorList>
            <person name="Hayashi T."/>
            <person name="Makino K."/>
            <person name="Ohnishi M."/>
            <person name="Kurokawa K."/>
            <person name="Ishii K."/>
            <person name="Yokoyama K."/>
            <person name="Han C.-G."/>
            <person name="Ohtsubo E."/>
            <person name="Nakayama K."/>
            <person name="Murata T."/>
            <person name="Tanaka M."/>
            <person name="Tobe T."/>
            <person name="Iida T."/>
            <person name="Takami H."/>
            <person name="Honda T."/>
            <person name="Sasakawa C."/>
            <person name="Ogasawara N."/>
            <person name="Yasunaga T."/>
            <person name="Kuhara S."/>
            <person name="Shiba T."/>
            <person name="Hattori M."/>
            <person name="Shinagawa H."/>
        </authorList>
    </citation>
    <scope>NUCLEOTIDE SEQUENCE [LARGE SCALE GENOMIC DNA]</scope>
    <source>
        <strain>O157:H7 / Sakai / RIMD 0509952 / EHEC</strain>
    </source>
</reference>
<proteinExistence type="inferred from homology"/>
<evidence type="ECO:0000255" key="1">
    <source>
        <dbReference type="HAMAP-Rule" id="MF_02033"/>
    </source>
</evidence>
<organism>
    <name type="scientific">Escherichia coli O157:H7</name>
    <dbReference type="NCBI Taxonomy" id="83334"/>
    <lineage>
        <taxon>Bacteria</taxon>
        <taxon>Pseudomonadati</taxon>
        <taxon>Pseudomonadota</taxon>
        <taxon>Gammaproteobacteria</taxon>
        <taxon>Enterobacterales</taxon>
        <taxon>Enterobacteriaceae</taxon>
        <taxon>Escherichia</taxon>
    </lineage>
</organism>
<name>FTSA_ECO57</name>
<sequence length="420" mass="45330">MIKATDRKLVVGLEIGTAKVAALVGEVLPDGMVNIIGVGSCPSRGMDKGGVNDLESVVKCVQRAIDQAELMADCQISSVYLALSGKHISCQNEIGMVPISEEEVTQEDVENVVHTAKSVRVRDEHRVLHVIPQEYAIDYQEGIKNPVGLSGVRMQAKVHLITCHNDMAKNIVKAVERCGLKVDQLIFAGLASSYSVLTEDERELGVCVVDIGGGTMDIAVYTGGALRHTKVIPYAGNVVTSDIAYAFGTPPSDAEAIKVRHGCALGSIVGKDESVEVPSVGGRPPRSLQRQTLAEVIEPRYTELLNLVNEEILQLQEKLRQQGVKHHLAAGIVLTGGAAQIEGLAACAQRVFHTQVRIGAPLNITGLTDYAQEPYYSTAVGLLHYGKESHLNGEAEVEKRVTASVGSWIKRLNSWLRKEF</sequence>